<dbReference type="GO" id="GO:0005576">
    <property type="term" value="C:extracellular region"/>
    <property type="evidence" value="ECO:0007669"/>
    <property type="project" value="UniProtKB-SubCell"/>
</dbReference>
<dbReference type="GO" id="GO:0090729">
    <property type="term" value="F:toxin activity"/>
    <property type="evidence" value="ECO:0007669"/>
    <property type="project" value="UniProtKB-KW"/>
</dbReference>
<sequence length="17" mass="1821">CCAIRLCNVYLCGSCCP</sequence>
<organism>
    <name type="scientific">Conus regius</name>
    <name type="common">Crown cone</name>
    <dbReference type="NCBI Taxonomy" id="101314"/>
    <lineage>
        <taxon>Eukaryota</taxon>
        <taxon>Metazoa</taxon>
        <taxon>Spiralia</taxon>
        <taxon>Lophotrochozoa</taxon>
        <taxon>Mollusca</taxon>
        <taxon>Gastropoda</taxon>
        <taxon>Caenogastropoda</taxon>
        <taxon>Neogastropoda</taxon>
        <taxon>Conoidea</taxon>
        <taxon>Conidae</taxon>
        <taxon>Conus</taxon>
        <taxon>Stephanoconus</taxon>
    </lineage>
</organism>
<keyword id="KW-0903">Direct protein sequencing</keyword>
<keyword id="KW-1015">Disulfide bond</keyword>
<keyword id="KW-0379">Hydroxylation</keyword>
<keyword id="KW-0964">Secreted</keyword>
<keyword id="KW-0800">Toxin</keyword>
<proteinExistence type="evidence at protein level"/>
<reference key="1">
    <citation type="journal article" date="2017" name="FEBS J.">
        <title>Structural plasticity of Mini-M conotoxins: expression of all mini-M subtypes by Conus regius.</title>
        <authorList>
            <person name="Franco A."/>
            <person name="Dovell S."/>
            <person name="Moller C."/>
            <person name="Grandal M."/>
            <person name="Clark E."/>
            <person name="Mari F."/>
        </authorList>
    </citation>
    <scope>PROTEIN SEQUENCE</scope>
    <scope>MASS SPECTROMETRY</scope>
    <scope>SUBCELLULAR LOCATION</scope>
    <scope>HYDROXYLATION AT PRO-17</scope>
    <source>
        <tissue>Venom</tissue>
    </source>
</reference>
<protein>
    <recommendedName>
        <fullName evidence="3">Conotoxin reg3i</fullName>
    </recommendedName>
</protein>
<comment type="subcellular location">
    <subcellularLocation>
        <location evidence="2">Secreted</location>
    </subcellularLocation>
</comment>
<comment type="tissue specificity">
    <text evidence="5">Expressed by the venom duct.</text>
</comment>
<comment type="domain">
    <text evidence="4">The cysteine framework is III (CC-C-C-CC). Classified in the M-2 branch, since 2 residues stand between the fourth and the fifth cysteine residues.</text>
</comment>
<comment type="mass spectrometry" mass="2060.5" method="MALDI" evidence="2"/>
<comment type="similarity">
    <text evidence="4">Belongs to the conotoxin M superfamily.</text>
</comment>
<comment type="caution">
    <text evidence="4">Experimental mass obtained by mass spectrometry (2060.5 Da) is very different from the calculated average mass 1821.25 Da, even with consideration of post-translational modifications.</text>
</comment>
<feature type="peptide" id="PRO_0000444766" description="Conotoxin reg3i" evidence="2">
    <location>
        <begin position="1"/>
        <end position="17"/>
    </location>
</feature>
<feature type="modified residue" description="4-hydroxyproline" evidence="2">
    <location>
        <position position="17"/>
    </location>
</feature>
<feature type="disulfide bond" evidence="1">
    <location>
        <begin position="1"/>
        <end position="16"/>
    </location>
</feature>
<feature type="disulfide bond" evidence="1">
    <location>
        <begin position="2"/>
        <end position="12"/>
    </location>
</feature>
<feature type="disulfide bond" evidence="1">
    <location>
        <begin position="7"/>
        <end position="15"/>
    </location>
</feature>
<accession>P0DPJ6</accession>
<evidence type="ECO:0000250" key="1">
    <source>
        <dbReference type="UniProtKB" id="P85021"/>
    </source>
</evidence>
<evidence type="ECO:0000269" key="2">
    <source>
    </source>
</evidence>
<evidence type="ECO:0000303" key="3">
    <source>
    </source>
</evidence>
<evidence type="ECO:0000305" key="4"/>
<evidence type="ECO:0000305" key="5">
    <source>
    </source>
</evidence>
<name>CM3I_CONRE</name>